<accession>Q931E6</accession>
<reference key="1">
    <citation type="journal article" date="2001" name="Lancet">
        <title>Whole genome sequencing of meticillin-resistant Staphylococcus aureus.</title>
        <authorList>
            <person name="Kuroda M."/>
            <person name="Ohta T."/>
            <person name="Uchiyama I."/>
            <person name="Baba T."/>
            <person name="Yuzawa H."/>
            <person name="Kobayashi I."/>
            <person name="Cui L."/>
            <person name="Oguchi A."/>
            <person name="Aoki K."/>
            <person name="Nagai Y."/>
            <person name="Lian J.-Q."/>
            <person name="Ito T."/>
            <person name="Kanamori M."/>
            <person name="Matsumaru H."/>
            <person name="Maruyama A."/>
            <person name="Murakami H."/>
            <person name="Hosoyama A."/>
            <person name="Mizutani-Ui Y."/>
            <person name="Takahashi N.K."/>
            <person name="Sawano T."/>
            <person name="Inoue R."/>
            <person name="Kaito C."/>
            <person name="Sekimizu K."/>
            <person name="Hirakawa H."/>
            <person name="Kuhara S."/>
            <person name="Goto S."/>
            <person name="Yabuzaki J."/>
            <person name="Kanehisa M."/>
            <person name="Yamashita A."/>
            <person name="Oshima K."/>
            <person name="Furuya K."/>
            <person name="Yoshino C."/>
            <person name="Shiba T."/>
            <person name="Hattori M."/>
            <person name="Ogasawara N."/>
            <person name="Hayashi H."/>
            <person name="Hiramatsu K."/>
        </authorList>
    </citation>
    <scope>NUCLEOTIDE SEQUENCE [LARGE SCALE GENOMIC DNA]</scope>
    <source>
        <strain>Mu50 / ATCC 700699</strain>
    </source>
</reference>
<name>PANB_STAAM</name>
<dbReference type="EC" id="2.1.2.11" evidence="1"/>
<dbReference type="EMBL" id="BA000017">
    <property type="protein sequence ID" value="BAB58761.1"/>
    <property type="molecule type" value="Genomic_DNA"/>
</dbReference>
<dbReference type="RefSeq" id="WP_000860041.1">
    <property type="nucleotide sequence ID" value="NC_002758.2"/>
</dbReference>
<dbReference type="SMR" id="Q931E6"/>
<dbReference type="KEGG" id="sav:SAV2599"/>
<dbReference type="HOGENOM" id="CLU_036645_1_0_9"/>
<dbReference type="PhylomeDB" id="Q931E6"/>
<dbReference type="UniPathway" id="UPA00028">
    <property type="reaction ID" value="UER00003"/>
</dbReference>
<dbReference type="Proteomes" id="UP000002481">
    <property type="component" value="Chromosome"/>
</dbReference>
<dbReference type="GO" id="GO:0005737">
    <property type="term" value="C:cytoplasm"/>
    <property type="evidence" value="ECO:0007669"/>
    <property type="project" value="UniProtKB-SubCell"/>
</dbReference>
<dbReference type="GO" id="GO:0003864">
    <property type="term" value="F:3-methyl-2-oxobutanoate hydroxymethyltransferase activity"/>
    <property type="evidence" value="ECO:0007669"/>
    <property type="project" value="UniProtKB-UniRule"/>
</dbReference>
<dbReference type="GO" id="GO:0000287">
    <property type="term" value="F:magnesium ion binding"/>
    <property type="evidence" value="ECO:0007669"/>
    <property type="project" value="TreeGrafter"/>
</dbReference>
<dbReference type="GO" id="GO:0015940">
    <property type="term" value="P:pantothenate biosynthetic process"/>
    <property type="evidence" value="ECO:0007669"/>
    <property type="project" value="UniProtKB-UniRule"/>
</dbReference>
<dbReference type="CDD" id="cd06557">
    <property type="entry name" value="KPHMT-like"/>
    <property type="match status" value="1"/>
</dbReference>
<dbReference type="FunFam" id="3.20.20.60:FF:000003">
    <property type="entry name" value="3-methyl-2-oxobutanoate hydroxymethyltransferase"/>
    <property type="match status" value="1"/>
</dbReference>
<dbReference type="Gene3D" id="3.20.20.60">
    <property type="entry name" value="Phosphoenolpyruvate-binding domains"/>
    <property type="match status" value="1"/>
</dbReference>
<dbReference type="HAMAP" id="MF_00156">
    <property type="entry name" value="PanB"/>
    <property type="match status" value="1"/>
</dbReference>
<dbReference type="InterPro" id="IPR003700">
    <property type="entry name" value="Pantoate_hydroxy_MeTrfase"/>
</dbReference>
<dbReference type="InterPro" id="IPR015813">
    <property type="entry name" value="Pyrv/PenolPyrv_kinase-like_dom"/>
</dbReference>
<dbReference type="InterPro" id="IPR040442">
    <property type="entry name" value="Pyrv_kinase-like_dom_sf"/>
</dbReference>
<dbReference type="NCBIfam" id="TIGR00222">
    <property type="entry name" value="panB"/>
    <property type="match status" value="1"/>
</dbReference>
<dbReference type="NCBIfam" id="NF001452">
    <property type="entry name" value="PRK00311.1"/>
    <property type="match status" value="1"/>
</dbReference>
<dbReference type="PANTHER" id="PTHR20881">
    <property type="entry name" value="3-METHYL-2-OXOBUTANOATE HYDROXYMETHYLTRANSFERASE"/>
    <property type="match status" value="1"/>
</dbReference>
<dbReference type="PANTHER" id="PTHR20881:SF0">
    <property type="entry name" value="3-METHYL-2-OXOBUTANOATE HYDROXYMETHYLTRANSFERASE"/>
    <property type="match status" value="1"/>
</dbReference>
<dbReference type="Pfam" id="PF02548">
    <property type="entry name" value="Pantoate_transf"/>
    <property type="match status" value="1"/>
</dbReference>
<dbReference type="PIRSF" id="PIRSF000388">
    <property type="entry name" value="Pantoate_hydroxy_MeTrfase"/>
    <property type="match status" value="1"/>
</dbReference>
<dbReference type="SUPFAM" id="SSF51621">
    <property type="entry name" value="Phosphoenolpyruvate/pyruvate domain"/>
    <property type="match status" value="1"/>
</dbReference>
<feature type="chain" id="PRO_0000184889" description="3-methyl-2-oxobutanoate hydroxymethyltransferase">
    <location>
        <begin position="1"/>
        <end position="272"/>
    </location>
</feature>
<feature type="active site" description="Proton acceptor" evidence="1">
    <location>
        <position position="179"/>
    </location>
</feature>
<feature type="binding site" evidence="1">
    <location>
        <begin position="43"/>
        <end position="44"/>
    </location>
    <ligand>
        <name>3-methyl-2-oxobutanoate</name>
        <dbReference type="ChEBI" id="CHEBI:11851"/>
    </ligand>
</feature>
<feature type="binding site" evidence="1">
    <location>
        <position position="43"/>
    </location>
    <ligand>
        <name>Mg(2+)</name>
        <dbReference type="ChEBI" id="CHEBI:18420"/>
    </ligand>
</feature>
<feature type="binding site" evidence="1">
    <location>
        <position position="82"/>
    </location>
    <ligand>
        <name>3-methyl-2-oxobutanoate</name>
        <dbReference type="ChEBI" id="CHEBI:11851"/>
    </ligand>
</feature>
<feature type="binding site" evidence="1">
    <location>
        <position position="82"/>
    </location>
    <ligand>
        <name>Mg(2+)</name>
        <dbReference type="ChEBI" id="CHEBI:18420"/>
    </ligand>
</feature>
<feature type="binding site" evidence="1">
    <location>
        <position position="112"/>
    </location>
    <ligand>
        <name>3-methyl-2-oxobutanoate</name>
        <dbReference type="ChEBI" id="CHEBI:11851"/>
    </ligand>
</feature>
<feature type="binding site" evidence="1">
    <location>
        <position position="114"/>
    </location>
    <ligand>
        <name>Mg(2+)</name>
        <dbReference type="ChEBI" id="CHEBI:18420"/>
    </ligand>
</feature>
<organism>
    <name type="scientific">Staphylococcus aureus (strain Mu50 / ATCC 700699)</name>
    <dbReference type="NCBI Taxonomy" id="158878"/>
    <lineage>
        <taxon>Bacteria</taxon>
        <taxon>Bacillati</taxon>
        <taxon>Bacillota</taxon>
        <taxon>Bacilli</taxon>
        <taxon>Bacillales</taxon>
        <taxon>Staphylococcaceae</taxon>
        <taxon>Staphylococcus</taxon>
    </lineage>
</organism>
<protein>
    <recommendedName>
        <fullName evidence="1">3-methyl-2-oxobutanoate hydroxymethyltransferase</fullName>
        <ecNumber evidence="1">2.1.2.11</ecNumber>
    </recommendedName>
    <alternativeName>
        <fullName evidence="1">Ketopantoate hydroxymethyltransferase</fullName>
        <shortName evidence="1">KPHMT</shortName>
    </alternativeName>
</protein>
<keyword id="KW-0963">Cytoplasm</keyword>
<keyword id="KW-0460">Magnesium</keyword>
<keyword id="KW-0479">Metal-binding</keyword>
<keyword id="KW-0566">Pantothenate biosynthesis</keyword>
<keyword id="KW-0808">Transferase</keyword>
<proteinExistence type="inferred from homology"/>
<comment type="function">
    <text evidence="1">Catalyzes the reversible reaction in which hydroxymethyl group from 5,10-methylenetetrahydrofolate is transferred onto alpha-ketoisovalerate to form ketopantoate.</text>
</comment>
<comment type="catalytic activity">
    <reaction evidence="1">
        <text>3-methyl-2-oxobutanoate + (6R)-5,10-methylene-5,6,7,8-tetrahydrofolate + H2O = 2-dehydropantoate + (6S)-5,6,7,8-tetrahydrofolate</text>
        <dbReference type="Rhea" id="RHEA:11824"/>
        <dbReference type="ChEBI" id="CHEBI:11561"/>
        <dbReference type="ChEBI" id="CHEBI:11851"/>
        <dbReference type="ChEBI" id="CHEBI:15377"/>
        <dbReference type="ChEBI" id="CHEBI:15636"/>
        <dbReference type="ChEBI" id="CHEBI:57453"/>
        <dbReference type="EC" id="2.1.2.11"/>
    </reaction>
</comment>
<comment type="cofactor">
    <cofactor evidence="1">
        <name>Mg(2+)</name>
        <dbReference type="ChEBI" id="CHEBI:18420"/>
    </cofactor>
    <text evidence="1">Binds 1 Mg(2+) ion per subunit.</text>
</comment>
<comment type="pathway">
    <text evidence="1">Cofactor biosynthesis; (R)-pantothenate biosynthesis; (R)-pantoate from 3-methyl-2-oxobutanoate: step 1/2.</text>
</comment>
<comment type="subunit">
    <text evidence="1">Homodecamer; pentamer of dimers.</text>
</comment>
<comment type="subcellular location">
    <subcellularLocation>
        <location evidence="1">Cytoplasm</location>
    </subcellularLocation>
</comment>
<comment type="similarity">
    <text evidence="1">Belongs to the PanB family.</text>
</comment>
<sequence length="272" mass="29241">MKTVSLLIDMKQKQTKISMVTAYDFPSAKQVEAAGIDMILVGDSLGMTVLGYESTVQVTLADMIHHGRAVRRGAPNTFVVVDMPIGAVGISMTQDLNHALKLYQETNANAIKAEGAHITPFIEKATAIGIPVVAHLGLTPQSVGVMGYKLQGATKEAAEQLILDAKNVEQAGAVALVLEAIPNDLAEEISKHLTIPVIGIGAGKGTDGQVLVYHDMLNYGVEHKAKFVKQFADFSVGVDGLKQYDQEVKSGAFPSEEYTYKKKIMNEVNNND</sequence>
<evidence type="ECO:0000255" key="1">
    <source>
        <dbReference type="HAMAP-Rule" id="MF_00156"/>
    </source>
</evidence>
<gene>
    <name evidence="1" type="primary">panB</name>
    <name type="ordered locus">SAV2599</name>
</gene>